<evidence type="ECO:0000250" key="1">
    <source>
        <dbReference type="UniProtKB" id="Q8N668"/>
    </source>
</evidence>
<evidence type="ECO:0000255" key="2">
    <source>
        <dbReference type="PROSITE-ProRule" id="PRU00602"/>
    </source>
</evidence>
<evidence type="ECO:0000305" key="3"/>
<sequence length="187" mass="22224">MDQPKYFSSLLGFLLKKEYEKDEDCKSLETLKEMVFSEQDDVTLELIEFTYNKCFEIIQKASYSDMQISTFENIVKESDFTTVQQECLNKFWKVNKKKIHEIIYKTTRFNNSLQKISWRIDVKTKSKEISEINEPVSIVELKLKNTNTNNNNNNKNDLIRFEMDKNQLEETLQQINSIQKHLQAKSL</sequence>
<proteinExistence type="inferred from homology"/>
<feature type="chain" id="PRO_0000327451" description="COMM domain-containing protein 1">
    <location>
        <begin position="1"/>
        <end position="187"/>
    </location>
</feature>
<feature type="domain" description="COMM" evidence="2">
    <location>
        <begin position="112"/>
        <end position="186"/>
    </location>
</feature>
<keyword id="KW-1185">Reference proteome</keyword>
<dbReference type="EMBL" id="AAFI02000187">
    <property type="protein sequence ID" value="EAL61393.1"/>
    <property type="molecule type" value="Genomic_DNA"/>
</dbReference>
<dbReference type="RefSeq" id="XP_629812.1">
    <property type="nucleotide sequence ID" value="XM_629810.1"/>
</dbReference>
<dbReference type="SMR" id="Q54DR0"/>
<dbReference type="FunCoup" id="Q54DR0">
    <property type="interactions" value="19"/>
</dbReference>
<dbReference type="STRING" id="44689.Q54DR0"/>
<dbReference type="PaxDb" id="44689-DDB0266452"/>
<dbReference type="EnsemblProtists" id="EAL61393">
    <property type="protein sequence ID" value="EAL61393"/>
    <property type="gene ID" value="DDB_G0292074"/>
</dbReference>
<dbReference type="GeneID" id="8628493"/>
<dbReference type="KEGG" id="ddi:DDB_G0292074"/>
<dbReference type="dictyBase" id="DDB_G0292074">
    <property type="gene designation" value="commd1"/>
</dbReference>
<dbReference type="VEuPathDB" id="AmoebaDB:DDB_G0292074"/>
<dbReference type="eggNOG" id="ENOG502RC3T">
    <property type="taxonomic scope" value="Eukaryota"/>
</dbReference>
<dbReference type="HOGENOM" id="CLU_124698_0_0_1"/>
<dbReference type="InParanoid" id="Q54DR0"/>
<dbReference type="OMA" id="MPTAIVE"/>
<dbReference type="PhylomeDB" id="Q54DR0"/>
<dbReference type="Reactome" id="R-DDI-8951664">
    <property type="pathway name" value="Neddylation"/>
</dbReference>
<dbReference type="PRO" id="PR:Q54DR0"/>
<dbReference type="Proteomes" id="UP000002195">
    <property type="component" value="Chromosome 6"/>
</dbReference>
<dbReference type="GO" id="GO:0005768">
    <property type="term" value="C:endosome"/>
    <property type="evidence" value="ECO:0000318"/>
    <property type="project" value="GO_Central"/>
</dbReference>
<dbReference type="GO" id="GO:0005507">
    <property type="term" value="F:copper ion binding"/>
    <property type="evidence" value="ECO:0000250"/>
    <property type="project" value="UniProtKB"/>
</dbReference>
<dbReference type="GO" id="GO:0055070">
    <property type="term" value="P:copper ion homeostasis"/>
    <property type="evidence" value="ECO:0000318"/>
    <property type="project" value="GO_Central"/>
</dbReference>
<dbReference type="GO" id="GO:2000009">
    <property type="term" value="P:negative regulation of protein localization to cell surface"/>
    <property type="evidence" value="ECO:0000318"/>
    <property type="project" value="GO_Central"/>
</dbReference>
<dbReference type="GO" id="GO:1902306">
    <property type="term" value="P:negative regulation of sodium ion transmembrane transport"/>
    <property type="evidence" value="ECO:0000318"/>
    <property type="project" value="GO_Central"/>
</dbReference>
<dbReference type="GO" id="GO:0031398">
    <property type="term" value="P:positive regulation of protein ubiquitination"/>
    <property type="evidence" value="ECO:0000318"/>
    <property type="project" value="GO_Central"/>
</dbReference>
<dbReference type="GO" id="GO:0032434">
    <property type="term" value="P:regulation of proteasomal ubiquitin-dependent protein catabolic process"/>
    <property type="evidence" value="ECO:0000318"/>
    <property type="project" value="GO_Central"/>
</dbReference>
<dbReference type="InterPro" id="IPR017920">
    <property type="entry name" value="COMM"/>
</dbReference>
<dbReference type="InterPro" id="IPR033776">
    <property type="entry name" value="COMMD1_N"/>
</dbReference>
<dbReference type="InterPro" id="IPR037351">
    <property type="entry name" value="Murr1"/>
</dbReference>
<dbReference type="PANTHER" id="PTHR21199">
    <property type="entry name" value="COMM DOMAIN-CONTAINING PROTEIN 1"/>
    <property type="match status" value="1"/>
</dbReference>
<dbReference type="PANTHER" id="PTHR21199:SF1">
    <property type="entry name" value="COMM DOMAIN-CONTAINING PROTEIN 1"/>
    <property type="match status" value="1"/>
</dbReference>
<dbReference type="Pfam" id="PF07258">
    <property type="entry name" value="COMM_domain"/>
    <property type="match status" value="1"/>
</dbReference>
<dbReference type="Pfam" id="PF17221">
    <property type="entry name" value="COMMD1_N"/>
    <property type="match status" value="1"/>
</dbReference>
<dbReference type="PROSITE" id="PS51269">
    <property type="entry name" value="COMM"/>
    <property type="match status" value="1"/>
</dbReference>
<organism>
    <name type="scientific">Dictyostelium discoideum</name>
    <name type="common">Social amoeba</name>
    <dbReference type="NCBI Taxonomy" id="44689"/>
    <lineage>
        <taxon>Eukaryota</taxon>
        <taxon>Amoebozoa</taxon>
        <taxon>Evosea</taxon>
        <taxon>Eumycetozoa</taxon>
        <taxon>Dictyostelia</taxon>
        <taxon>Dictyosteliales</taxon>
        <taxon>Dictyosteliaceae</taxon>
        <taxon>Dictyostelium</taxon>
    </lineage>
</organism>
<protein>
    <recommendedName>
        <fullName>COMM domain-containing protein 1</fullName>
    </recommendedName>
</protein>
<accession>Q54DR0</accession>
<comment type="function">
    <text evidence="1">Scaffold protein in the commander complex that is essential for endosomal recycling of transmembrane cargos; the commander complex is composed of the CCC subcomplex and the retriever subcomplex.</text>
</comment>
<comment type="subunit">
    <text evidence="1">Component of the commander complex consisting of the CCC subcomplex and the retriever subcomplex.</text>
</comment>
<comment type="similarity">
    <text evidence="3">Belongs to the COMM domain-containing protein 1 family.</text>
</comment>
<gene>
    <name type="primary">commd1</name>
    <name type="ORF">DDB_G0292074</name>
</gene>
<reference key="1">
    <citation type="journal article" date="2005" name="Nature">
        <title>The genome of the social amoeba Dictyostelium discoideum.</title>
        <authorList>
            <person name="Eichinger L."/>
            <person name="Pachebat J.A."/>
            <person name="Gloeckner G."/>
            <person name="Rajandream M.A."/>
            <person name="Sucgang R."/>
            <person name="Berriman M."/>
            <person name="Song J."/>
            <person name="Olsen R."/>
            <person name="Szafranski K."/>
            <person name="Xu Q."/>
            <person name="Tunggal B."/>
            <person name="Kummerfeld S."/>
            <person name="Madera M."/>
            <person name="Konfortov B.A."/>
            <person name="Rivero F."/>
            <person name="Bankier A.T."/>
            <person name="Lehmann R."/>
            <person name="Hamlin N."/>
            <person name="Davies R."/>
            <person name="Gaudet P."/>
            <person name="Fey P."/>
            <person name="Pilcher K."/>
            <person name="Chen G."/>
            <person name="Saunders D."/>
            <person name="Sodergren E.J."/>
            <person name="Davis P."/>
            <person name="Kerhornou A."/>
            <person name="Nie X."/>
            <person name="Hall N."/>
            <person name="Anjard C."/>
            <person name="Hemphill L."/>
            <person name="Bason N."/>
            <person name="Farbrother P."/>
            <person name="Desany B."/>
            <person name="Just E."/>
            <person name="Morio T."/>
            <person name="Rost R."/>
            <person name="Churcher C.M."/>
            <person name="Cooper J."/>
            <person name="Haydock S."/>
            <person name="van Driessche N."/>
            <person name="Cronin A."/>
            <person name="Goodhead I."/>
            <person name="Muzny D.M."/>
            <person name="Mourier T."/>
            <person name="Pain A."/>
            <person name="Lu M."/>
            <person name="Harper D."/>
            <person name="Lindsay R."/>
            <person name="Hauser H."/>
            <person name="James K.D."/>
            <person name="Quiles M."/>
            <person name="Madan Babu M."/>
            <person name="Saito T."/>
            <person name="Buchrieser C."/>
            <person name="Wardroper A."/>
            <person name="Felder M."/>
            <person name="Thangavelu M."/>
            <person name="Johnson D."/>
            <person name="Knights A."/>
            <person name="Loulseged H."/>
            <person name="Mungall K.L."/>
            <person name="Oliver K."/>
            <person name="Price C."/>
            <person name="Quail M.A."/>
            <person name="Urushihara H."/>
            <person name="Hernandez J."/>
            <person name="Rabbinowitsch E."/>
            <person name="Steffen D."/>
            <person name="Sanders M."/>
            <person name="Ma J."/>
            <person name="Kohara Y."/>
            <person name="Sharp S."/>
            <person name="Simmonds M.N."/>
            <person name="Spiegler S."/>
            <person name="Tivey A."/>
            <person name="Sugano S."/>
            <person name="White B."/>
            <person name="Walker D."/>
            <person name="Woodward J.R."/>
            <person name="Winckler T."/>
            <person name="Tanaka Y."/>
            <person name="Shaulsky G."/>
            <person name="Schleicher M."/>
            <person name="Weinstock G.M."/>
            <person name="Rosenthal A."/>
            <person name="Cox E.C."/>
            <person name="Chisholm R.L."/>
            <person name="Gibbs R.A."/>
            <person name="Loomis W.F."/>
            <person name="Platzer M."/>
            <person name="Kay R.R."/>
            <person name="Williams J.G."/>
            <person name="Dear P.H."/>
            <person name="Noegel A.A."/>
            <person name="Barrell B.G."/>
            <person name="Kuspa A."/>
        </authorList>
    </citation>
    <scope>NUCLEOTIDE SEQUENCE [LARGE SCALE GENOMIC DNA]</scope>
    <source>
        <strain>AX4</strain>
    </source>
</reference>
<name>COMD1_DICDI</name>